<name>MTNA_DROME</name>
<reference key="1">
    <citation type="journal article" date="2000" name="Science">
        <title>The genome sequence of Drosophila melanogaster.</title>
        <authorList>
            <person name="Adams M.D."/>
            <person name="Celniker S.E."/>
            <person name="Holt R.A."/>
            <person name="Evans C.A."/>
            <person name="Gocayne J.D."/>
            <person name="Amanatides P.G."/>
            <person name="Scherer S.E."/>
            <person name="Li P.W."/>
            <person name="Hoskins R.A."/>
            <person name="Galle R.F."/>
            <person name="George R.A."/>
            <person name="Lewis S.E."/>
            <person name="Richards S."/>
            <person name="Ashburner M."/>
            <person name="Henderson S.N."/>
            <person name="Sutton G.G."/>
            <person name="Wortman J.R."/>
            <person name="Yandell M.D."/>
            <person name="Zhang Q."/>
            <person name="Chen L.X."/>
            <person name="Brandon R.C."/>
            <person name="Rogers Y.-H.C."/>
            <person name="Blazej R.G."/>
            <person name="Champe M."/>
            <person name="Pfeiffer B.D."/>
            <person name="Wan K.H."/>
            <person name="Doyle C."/>
            <person name="Baxter E.G."/>
            <person name="Helt G."/>
            <person name="Nelson C.R."/>
            <person name="Miklos G.L.G."/>
            <person name="Abril J.F."/>
            <person name="Agbayani A."/>
            <person name="An H.-J."/>
            <person name="Andrews-Pfannkoch C."/>
            <person name="Baldwin D."/>
            <person name="Ballew R.M."/>
            <person name="Basu A."/>
            <person name="Baxendale J."/>
            <person name="Bayraktaroglu L."/>
            <person name="Beasley E.M."/>
            <person name="Beeson K.Y."/>
            <person name="Benos P.V."/>
            <person name="Berman B.P."/>
            <person name="Bhandari D."/>
            <person name="Bolshakov S."/>
            <person name="Borkova D."/>
            <person name="Botchan M.R."/>
            <person name="Bouck J."/>
            <person name="Brokstein P."/>
            <person name="Brottier P."/>
            <person name="Burtis K.C."/>
            <person name="Busam D.A."/>
            <person name="Butler H."/>
            <person name="Cadieu E."/>
            <person name="Center A."/>
            <person name="Chandra I."/>
            <person name="Cherry J.M."/>
            <person name="Cawley S."/>
            <person name="Dahlke C."/>
            <person name="Davenport L.B."/>
            <person name="Davies P."/>
            <person name="de Pablos B."/>
            <person name="Delcher A."/>
            <person name="Deng Z."/>
            <person name="Mays A.D."/>
            <person name="Dew I."/>
            <person name="Dietz S.M."/>
            <person name="Dodson K."/>
            <person name="Doup L.E."/>
            <person name="Downes M."/>
            <person name="Dugan-Rocha S."/>
            <person name="Dunkov B.C."/>
            <person name="Dunn P."/>
            <person name="Durbin K.J."/>
            <person name="Evangelista C.C."/>
            <person name="Ferraz C."/>
            <person name="Ferriera S."/>
            <person name="Fleischmann W."/>
            <person name="Fosler C."/>
            <person name="Gabrielian A.E."/>
            <person name="Garg N.S."/>
            <person name="Gelbart W.M."/>
            <person name="Glasser K."/>
            <person name="Glodek A."/>
            <person name="Gong F."/>
            <person name="Gorrell J.H."/>
            <person name="Gu Z."/>
            <person name="Guan P."/>
            <person name="Harris M."/>
            <person name="Harris N.L."/>
            <person name="Harvey D.A."/>
            <person name="Heiman T.J."/>
            <person name="Hernandez J.R."/>
            <person name="Houck J."/>
            <person name="Hostin D."/>
            <person name="Houston K.A."/>
            <person name="Howland T.J."/>
            <person name="Wei M.-H."/>
            <person name="Ibegwam C."/>
            <person name="Jalali M."/>
            <person name="Kalush F."/>
            <person name="Karpen G.H."/>
            <person name="Ke Z."/>
            <person name="Kennison J.A."/>
            <person name="Ketchum K.A."/>
            <person name="Kimmel B.E."/>
            <person name="Kodira C.D."/>
            <person name="Kraft C.L."/>
            <person name="Kravitz S."/>
            <person name="Kulp D."/>
            <person name="Lai Z."/>
            <person name="Lasko P."/>
            <person name="Lei Y."/>
            <person name="Levitsky A.A."/>
            <person name="Li J.H."/>
            <person name="Li Z."/>
            <person name="Liang Y."/>
            <person name="Lin X."/>
            <person name="Liu X."/>
            <person name="Mattei B."/>
            <person name="McIntosh T.C."/>
            <person name="McLeod M.P."/>
            <person name="McPherson D."/>
            <person name="Merkulov G."/>
            <person name="Milshina N.V."/>
            <person name="Mobarry C."/>
            <person name="Morris J."/>
            <person name="Moshrefi A."/>
            <person name="Mount S.M."/>
            <person name="Moy M."/>
            <person name="Murphy B."/>
            <person name="Murphy L."/>
            <person name="Muzny D.M."/>
            <person name="Nelson D.L."/>
            <person name="Nelson D.R."/>
            <person name="Nelson K.A."/>
            <person name="Nixon K."/>
            <person name="Nusskern D.R."/>
            <person name="Pacleb J.M."/>
            <person name="Palazzolo M."/>
            <person name="Pittman G.S."/>
            <person name="Pan S."/>
            <person name="Pollard J."/>
            <person name="Puri V."/>
            <person name="Reese M.G."/>
            <person name="Reinert K."/>
            <person name="Remington K."/>
            <person name="Saunders R.D.C."/>
            <person name="Scheeler F."/>
            <person name="Shen H."/>
            <person name="Shue B.C."/>
            <person name="Siden-Kiamos I."/>
            <person name="Simpson M."/>
            <person name="Skupski M.P."/>
            <person name="Smith T.J."/>
            <person name="Spier E."/>
            <person name="Spradling A.C."/>
            <person name="Stapleton M."/>
            <person name="Strong R."/>
            <person name="Sun E."/>
            <person name="Svirskas R."/>
            <person name="Tector C."/>
            <person name="Turner R."/>
            <person name="Venter E."/>
            <person name="Wang A.H."/>
            <person name="Wang X."/>
            <person name="Wang Z.-Y."/>
            <person name="Wassarman D.A."/>
            <person name="Weinstock G.M."/>
            <person name="Weissenbach J."/>
            <person name="Williams S.M."/>
            <person name="Woodage T."/>
            <person name="Worley K.C."/>
            <person name="Wu D."/>
            <person name="Yang S."/>
            <person name="Yao Q.A."/>
            <person name="Ye J."/>
            <person name="Yeh R.-F."/>
            <person name="Zaveri J.S."/>
            <person name="Zhan M."/>
            <person name="Zhang G."/>
            <person name="Zhao Q."/>
            <person name="Zheng L."/>
            <person name="Zheng X.H."/>
            <person name="Zhong F.N."/>
            <person name="Zhong W."/>
            <person name="Zhou X."/>
            <person name="Zhu S.C."/>
            <person name="Zhu X."/>
            <person name="Smith H.O."/>
            <person name="Gibbs R.A."/>
            <person name="Myers E.W."/>
            <person name="Rubin G.M."/>
            <person name="Venter J.C."/>
        </authorList>
    </citation>
    <scope>NUCLEOTIDE SEQUENCE [LARGE SCALE GENOMIC DNA]</scope>
    <source>
        <strain>Berkeley</strain>
    </source>
</reference>
<reference key="2">
    <citation type="journal article" date="2002" name="Genome Biol.">
        <title>Annotation of the Drosophila melanogaster euchromatic genome: a systematic review.</title>
        <authorList>
            <person name="Misra S."/>
            <person name="Crosby M.A."/>
            <person name="Mungall C.J."/>
            <person name="Matthews B.B."/>
            <person name="Campbell K.S."/>
            <person name="Hradecky P."/>
            <person name="Huang Y."/>
            <person name="Kaminker J.S."/>
            <person name="Millburn G.H."/>
            <person name="Prochnik S.E."/>
            <person name="Smith C.D."/>
            <person name="Tupy J.L."/>
            <person name="Whitfield E.J."/>
            <person name="Bayraktaroglu L."/>
            <person name="Berman B.P."/>
            <person name="Bettencourt B.R."/>
            <person name="Celniker S.E."/>
            <person name="de Grey A.D.N.J."/>
            <person name="Drysdale R.A."/>
            <person name="Harris N.L."/>
            <person name="Richter J."/>
            <person name="Russo S."/>
            <person name="Schroeder A.J."/>
            <person name="Shu S.Q."/>
            <person name="Stapleton M."/>
            <person name="Yamada C."/>
            <person name="Ashburner M."/>
            <person name="Gelbart W.M."/>
            <person name="Rubin G.M."/>
            <person name="Lewis S.E."/>
        </authorList>
    </citation>
    <scope>GENOME REANNOTATION</scope>
    <source>
        <strain>Berkeley</strain>
    </source>
</reference>
<reference key="3">
    <citation type="journal article" date="2002" name="Genome Biol.">
        <title>A Drosophila full-length cDNA resource.</title>
        <authorList>
            <person name="Stapleton M."/>
            <person name="Carlson J.W."/>
            <person name="Brokstein P."/>
            <person name="Yu C."/>
            <person name="Champe M."/>
            <person name="George R.A."/>
            <person name="Guarin H."/>
            <person name="Kronmiller B."/>
            <person name="Pacleb J.M."/>
            <person name="Park S."/>
            <person name="Wan K.H."/>
            <person name="Rubin G.M."/>
            <person name="Celniker S.E."/>
        </authorList>
    </citation>
    <scope>NUCLEOTIDE SEQUENCE [LARGE SCALE MRNA]</scope>
    <source>
        <strain>Berkeley</strain>
        <tissue>Embryo</tissue>
    </source>
</reference>
<gene>
    <name type="ORF">CG11334</name>
</gene>
<keyword id="KW-0028">Amino-acid biosynthesis</keyword>
<keyword id="KW-0963">Cytoplasm</keyword>
<keyword id="KW-0413">Isomerase</keyword>
<keyword id="KW-0486">Methionine biosynthesis</keyword>
<keyword id="KW-0539">Nucleus</keyword>
<keyword id="KW-1185">Reference proteome</keyword>
<comment type="function">
    <text evidence="1">Catalyzes the interconversion of methylthioribose-1-phosphate (MTR-1-P) into methylthioribulose-1-phosphate (MTRu-1-P).</text>
</comment>
<comment type="catalytic activity">
    <reaction evidence="1">
        <text>5-(methylsulfanyl)-alpha-D-ribose 1-phosphate = 5-(methylsulfanyl)-D-ribulose 1-phosphate</text>
        <dbReference type="Rhea" id="RHEA:19989"/>
        <dbReference type="ChEBI" id="CHEBI:58533"/>
        <dbReference type="ChEBI" id="CHEBI:58548"/>
        <dbReference type="EC" id="5.3.1.23"/>
    </reaction>
</comment>
<comment type="pathway">
    <text evidence="1">Amino-acid biosynthesis; L-methionine biosynthesis via salvage pathway; L-methionine from S-methyl-5-thio-alpha-D-ribose 1-phosphate: step 1/6.</text>
</comment>
<comment type="subcellular location">
    <subcellularLocation>
        <location evidence="1">Cytoplasm</location>
    </subcellularLocation>
    <subcellularLocation>
        <location evidence="1">Nucleus</location>
    </subcellularLocation>
</comment>
<comment type="similarity">
    <text evidence="1">Belongs to the eIF-2B alpha/beta/delta subunits family. MtnA subfamily.</text>
</comment>
<evidence type="ECO:0000255" key="1">
    <source>
        <dbReference type="HAMAP-Rule" id="MF_03119"/>
    </source>
</evidence>
<proteinExistence type="evidence at transcript level"/>
<feature type="chain" id="PRO_0000401978" description="Methylthioribose-1-phosphate isomerase">
    <location>
        <begin position="1"/>
        <end position="364"/>
    </location>
</feature>
<feature type="active site" description="Proton donor" evidence="1">
    <location>
        <position position="254"/>
    </location>
</feature>
<feature type="site" description="Transition state stabilizer" evidence="1">
    <location>
        <position position="174"/>
    </location>
</feature>
<accession>Q9V9X4</accession>
<organism>
    <name type="scientific">Drosophila melanogaster</name>
    <name type="common">Fruit fly</name>
    <dbReference type="NCBI Taxonomy" id="7227"/>
    <lineage>
        <taxon>Eukaryota</taxon>
        <taxon>Metazoa</taxon>
        <taxon>Ecdysozoa</taxon>
        <taxon>Arthropoda</taxon>
        <taxon>Hexapoda</taxon>
        <taxon>Insecta</taxon>
        <taxon>Pterygota</taxon>
        <taxon>Neoptera</taxon>
        <taxon>Endopterygota</taxon>
        <taxon>Diptera</taxon>
        <taxon>Brachycera</taxon>
        <taxon>Muscomorpha</taxon>
        <taxon>Ephydroidea</taxon>
        <taxon>Drosophilidae</taxon>
        <taxon>Drosophila</taxon>
        <taxon>Sophophora</taxon>
    </lineage>
</organism>
<dbReference type="EC" id="5.3.1.23" evidence="1"/>
<dbReference type="EMBL" id="AE014297">
    <property type="protein sequence ID" value="AAF57154.1"/>
    <property type="molecule type" value="Genomic_DNA"/>
</dbReference>
<dbReference type="EMBL" id="AE014297">
    <property type="protein sequence ID" value="AAF57155.1"/>
    <property type="molecule type" value="Genomic_DNA"/>
</dbReference>
<dbReference type="EMBL" id="AY060664">
    <property type="protein sequence ID" value="AAL28212.1"/>
    <property type="molecule type" value="mRNA"/>
</dbReference>
<dbReference type="RefSeq" id="NP_001263144.1">
    <property type="nucleotide sequence ID" value="NM_001276215.1"/>
</dbReference>
<dbReference type="RefSeq" id="NP_651868.1">
    <property type="nucleotide sequence ID" value="NM_143611.3"/>
</dbReference>
<dbReference type="RefSeq" id="NP_733430.1">
    <property type="nucleotide sequence ID" value="NM_170551.3"/>
</dbReference>
<dbReference type="SMR" id="Q9V9X4"/>
<dbReference type="BioGRID" id="68556">
    <property type="interactions" value="6"/>
</dbReference>
<dbReference type="FunCoup" id="Q9V9X4">
    <property type="interactions" value="1619"/>
</dbReference>
<dbReference type="IntAct" id="Q9V9X4">
    <property type="interactions" value="3"/>
</dbReference>
<dbReference type="STRING" id="7227.FBpp0085169"/>
<dbReference type="GlyGen" id="Q9V9X4">
    <property type="glycosylation" value="1 site"/>
</dbReference>
<dbReference type="PaxDb" id="7227-FBpp0085169"/>
<dbReference type="DNASU" id="43713"/>
<dbReference type="EnsemblMetazoa" id="FBtr0085808">
    <property type="protein sequence ID" value="FBpp0085169"/>
    <property type="gene ID" value="FBgn0039849"/>
</dbReference>
<dbReference type="EnsemblMetazoa" id="FBtr0085809">
    <property type="protein sequence ID" value="FBpp0085170"/>
    <property type="gene ID" value="FBgn0039849"/>
</dbReference>
<dbReference type="EnsemblMetazoa" id="FBtr0334556">
    <property type="protein sequence ID" value="FBpp0306623"/>
    <property type="gene ID" value="FBgn0039849"/>
</dbReference>
<dbReference type="GeneID" id="43713"/>
<dbReference type="KEGG" id="dme:Dmel_CG11334"/>
<dbReference type="UCSC" id="CG11334-RA">
    <property type="organism name" value="d. melanogaster"/>
</dbReference>
<dbReference type="AGR" id="FB:FBgn0039849"/>
<dbReference type="FlyBase" id="FBgn0039849">
    <property type="gene designation" value="CG11334"/>
</dbReference>
<dbReference type="VEuPathDB" id="VectorBase:FBgn0039849"/>
<dbReference type="eggNOG" id="KOG1468">
    <property type="taxonomic scope" value="Eukaryota"/>
</dbReference>
<dbReference type="GeneTree" id="ENSGT00390000013732"/>
<dbReference type="HOGENOM" id="CLU_016218_1_3_1"/>
<dbReference type="InParanoid" id="Q9V9X4"/>
<dbReference type="OMA" id="CETRPLN"/>
<dbReference type="OrthoDB" id="2461at2759"/>
<dbReference type="PhylomeDB" id="Q9V9X4"/>
<dbReference type="Reactome" id="R-DME-1237112">
    <property type="pathway name" value="Methionine salvage pathway"/>
</dbReference>
<dbReference type="UniPathway" id="UPA00904">
    <property type="reaction ID" value="UER00874"/>
</dbReference>
<dbReference type="BioGRID-ORCS" id="43713">
    <property type="hits" value="0 hits in 1 CRISPR screen"/>
</dbReference>
<dbReference type="GenomeRNAi" id="43713"/>
<dbReference type="PRO" id="PR:Q9V9X4"/>
<dbReference type="Proteomes" id="UP000000803">
    <property type="component" value="Chromosome 3R"/>
</dbReference>
<dbReference type="Bgee" id="FBgn0039849">
    <property type="expression patterns" value="Expressed in adult Malpighian tubule (Drosophila) and 111 other cell types or tissues"/>
</dbReference>
<dbReference type="ExpressionAtlas" id="Q9V9X4">
    <property type="expression patterns" value="baseline and differential"/>
</dbReference>
<dbReference type="GO" id="GO:0005737">
    <property type="term" value="C:cytoplasm"/>
    <property type="evidence" value="ECO:0007669"/>
    <property type="project" value="UniProtKB-SubCell"/>
</dbReference>
<dbReference type="GO" id="GO:0005634">
    <property type="term" value="C:nucleus"/>
    <property type="evidence" value="ECO:0007669"/>
    <property type="project" value="UniProtKB-SubCell"/>
</dbReference>
<dbReference type="GO" id="GO:0046523">
    <property type="term" value="F:S-methyl-5-thioribose-1-phosphate isomerase activity"/>
    <property type="evidence" value="ECO:0000318"/>
    <property type="project" value="GO_Central"/>
</dbReference>
<dbReference type="GO" id="GO:0019509">
    <property type="term" value="P:L-methionine salvage from methylthioadenosine"/>
    <property type="evidence" value="ECO:0000318"/>
    <property type="project" value="GO_Central"/>
</dbReference>
<dbReference type="FunFam" id="1.20.120.420:FF:000010">
    <property type="entry name" value="Methylthioribose-1-phosphate isomerase"/>
    <property type="match status" value="1"/>
</dbReference>
<dbReference type="FunFam" id="3.40.50.10470:FF:000003">
    <property type="entry name" value="Methylthioribose-1-phosphate isomerase"/>
    <property type="match status" value="1"/>
</dbReference>
<dbReference type="Gene3D" id="1.20.120.420">
    <property type="entry name" value="translation initiation factor eif-2b, domain 1"/>
    <property type="match status" value="1"/>
</dbReference>
<dbReference type="Gene3D" id="3.40.50.10470">
    <property type="entry name" value="Translation initiation factor eif-2b, domain 2"/>
    <property type="match status" value="1"/>
</dbReference>
<dbReference type="HAMAP" id="MF_01678">
    <property type="entry name" value="Salvage_MtnA"/>
    <property type="match status" value="1"/>
</dbReference>
<dbReference type="InterPro" id="IPR000649">
    <property type="entry name" value="IF-2B-related"/>
</dbReference>
<dbReference type="InterPro" id="IPR005251">
    <property type="entry name" value="IF-M1Pi"/>
</dbReference>
<dbReference type="InterPro" id="IPR042529">
    <property type="entry name" value="IF_2B-like_C"/>
</dbReference>
<dbReference type="InterPro" id="IPR011559">
    <property type="entry name" value="Initiation_fac_2B_a/b/d"/>
</dbReference>
<dbReference type="InterPro" id="IPR027363">
    <property type="entry name" value="M1Pi_N"/>
</dbReference>
<dbReference type="InterPro" id="IPR037171">
    <property type="entry name" value="NagB/RpiA_transferase-like"/>
</dbReference>
<dbReference type="NCBIfam" id="TIGR00524">
    <property type="entry name" value="eIF-2B_rel"/>
    <property type="match status" value="1"/>
</dbReference>
<dbReference type="NCBIfam" id="NF004326">
    <property type="entry name" value="PRK05720.1"/>
    <property type="match status" value="1"/>
</dbReference>
<dbReference type="NCBIfam" id="TIGR00512">
    <property type="entry name" value="salvage_mtnA"/>
    <property type="match status" value="1"/>
</dbReference>
<dbReference type="PANTHER" id="PTHR43475">
    <property type="entry name" value="METHYLTHIORIBOSE-1-PHOSPHATE ISOMERASE"/>
    <property type="match status" value="1"/>
</dbReference>
<dbReference type="PANTHER" id="PTHR43475:SF1">
    <property type="entry name" value="METHYLTHIORIBOSE-1-PHOSPHATE ISOMERASE"/>
    <property type="match status" value="1"/>
</dbReference>
<dbReference type="Pfam" id="PF01008">
    <property type="entry name" value="IF-2B"/>
    <property type="match status" value="1"/>
</dbReference>
<dbReference type="SUPFAM" id="SSF100950">
    <property type="entry name" value="NagB/RpiA/CoA transferase-like"/>
    <property type="match status" value="1"/>
</dbReference>
<sequence length="364" mass="39108">MSLQSIKYSRGSLEILDQLLLPGQSKYVVVRGVEDGWKVINKMQVRGAPAIAIVGCLSLAVEINPEDFENKKSLRQEIEGKLNYLVSARPTAVNMKIAADELITLANELYKDEAIDVTQMKHRFLDATEAMLKKDIADNRAIGANGAQAILQGVAKAGKAPAGSTGSVRVLTHCNTGSLATAGYGTALGVVRQLAELGKLEHVYCTETRPYNQGARLTAYELVHEKFPATLVLDSMVAALLRAKNVAAVVVGADRVASNGDTANKIGTYQIAVVAKHHDVPFYVAAPLTSIDLAIPGGDHIIIEERPDREMTHVGEHRIAAPGINCWNPAFDVTPASLITGIITERGVFKPAELKEAITKLLES</sequence>
<protein>
    <recommendedName>
        <fullName evidence="1">Methylthioribose-1-phosphate isomerase</fullName>
        <shortName evidence="1">M1Pi</shortName>
        <shortName evidence="1">MTR-1-P isomerase</shortName>
        <ecNumber evidence="1">5.3.1.23</ecNumber>
    </recommendedName>
    <alternativeName>
        <fullName evidence="1">S-methyl-5-thioribose-1-phosphate isomerase</fullName>
    </alternativeName>
    <alternativeName>
        <fullName evidence="1">Translation initiation factor eIF-2B subunit alpha/beta/delta-like protein</fullName>
    </alternativeName>
</protein>